<feature type="chain" id="PRO_0000179350" description="Trigger factor">
    <location>
        <begin position="1"/>
        <end position="446"/>
    </location>
</feature>
<feature type="domain" description="PPIase FKBP-type" evidence="1">
    <location>
        <begin position="182"/>
        <end position="267"/>
    </location>
</feature>
<sequence length="446" mass="50681">MLSNYVVKEILNDNKLKREYEFTIDNKYFFSQLDAKLLEIAKNVKIPGFRAGKASIDLIKKEYLNNAVNTLIRKIVEDTSSEFIKNGKFGEIISSNVSVISCPDYGMGVSSTSGDPAGDNLVYKLSFEVMPEAPLIALDDIVLSDIEADIQDSDISEFIENLKKQCSEFVEVSDSEYRVKMGDKVVVDYQNRIKGKMLKGGDTKDLAVIVGRGLVLKDFEDQLIGMKIGESKSFPIQFPDNYGVAYLVGKSADVSVTVKNIFMMKAIEENENVIKYYQFKDEQALKDFARNKIKQQFDKISFAIVKKELFDYLDKTYSIDVPECVVTKEIDKINQEIQDSAGTVQVDVKAEAMKRVKLGILLVKMSRHHNISINKDDVFSFINTYYSDYGISLNDVLRMLQSNKDFANYISGKVLEDKVINYIIRLVKKDKKVMTTQELNLMLENM</sequence>
<reference key="1">
    <citation type="journal article" date="2006" name="J. Bacteriol.">
        <title>Comparative genomic analysis of three strains of Ehrlichia ruminantium reveals an active process of genome size plasticity.</title>
        <authorList>
            <person name="Frutos R."/>
            <person name="Viari A."/>
            <person name="Ferraz C."/>
            <person name="Morgat A."/>
            <person name="Eychenie S."/>
            <person name="Kandassamy Y."/>
            <person name="Chantal I."/>
            <person name="Bensaid A."/>
            <person name="Coissac E."/>
            <person name="Vachiery N."/>
            <person name="Demaille J."/>
            <person name="Martinez D."/>
        </authorList>
    </citation>
    <scope>NUCLEOTIDE SEQUENCE [LARGE SCALE GENOMIC DNA]</scope>
    <source>
        <strain>Gardel</strain>
    </source>
</reference>
<accession>Q5FFG8</accession>
<dbReference type="EC" id="5.2.1.8" evidence="1"/>
<dbReference type="EMBL" id="CR925677">
    <property type="protein sequence ID" value="CAI27648.1"/>
    <property type="molecule type" value="Genomic_DNA"/>
</dbReference>
<dbReference type="RefSeq" id="WP_011255370.1">
    <property type="nucleotide sequence ID" value="NC_006831.1"/>
</dbReference>
<dbReference type="SMR" id="Q5FFG8"/>
<dbReference type="KEGG" id="erg:ERGA_CDS_01960"/>
<dbReference type="HOGENOM" id="CLU_033058_2_2_5"/>
<dbReference type="OrthoDB" id="9767721at2"/>
<dbReference type="Proteomes" id="UP000000533">
    <property type="component" value="Chromosome"/>
</dbReference>
<dbReference type="GO" id="GO:0005737">
    <property type="term" value="C:cytoplasm"/>
    <property type="evidence" value="ECO:0007669"/>
    <property type="project" value="UniProtKB-SubCell"/>
</dbReference>
<dbReference type="GO" id="GO:0003755">
    <property type="term" value="F:peptidyl-prolyl cis-trans isomerase activity"/>
    <property type="evidence" value="ECO:0007669"/>
    <property type="project" value="UniProtKB-UniRule"/>
</dbReference>
<dbReference type="GO" id="GO:0051301">
    <property type="term" value="P:cell division"/>
    <property type="evidence" value="ECO:0007669"/>
    <property type="project" value="UniProtKB-KW"/>
</dbReference>
<dbReference type="GO" id="GO:0006457">
    <property type="term" value="P:protein folding"/>
    <property type="evidence" value="ECO:0007669"/>
    <property type="project" value="UniProtKB-UniRule"/>
</dbReference>
<dbReference type="GO" id="GO:0015031">
    <property type="term" value="P:protein transport"/>
    <property type="evidence" value="ECO:0007669"/>
    <property type="project" value="UniProtKB-UniRule"/>
</dbReference>
<dbReference type="Gene3D" id="3.10.50.40">
    <property type="match status" value="1"/>
</dbReference>
<dbReference type="Gene3D" id="3.30.70.1050">
    <property type="entry name" value="Trigger factor ribosome-binding domain"/>
    <property type="match status" value="1"/>
</dbReference>
<dbReference type="Gene3D" id="1.10.3120.10">
    <property type="entry name" value="Trigger factor, C-terminal domain"/>
    <property type="match status" value="1"/>
</dbReference>
<dbReference type="HAMAP" id="MF_00303">
    <property type="entry name" value="Trigger_factor_Tig"/>
    <property type="match status" value="1"/>
</dbReference>
<dbReference type="InterPro" id="IPR046357">
    <property type="entry name" value="PPIase_dom_sf"/>
</dbReference>
<dbReference type="InterPro" id="IPR001179">
    <property type="entry name" value="PPIase_FKBP_dom"/>
</dbReference>
<dbReference type="InterPro" id="IPR005215">
    <property type="entry name" value="Trig_fac"/>
</dbReference>
<dbReference type="InterPro" id="IPR008880">
    <property type="entry name" value="Trigger_fac_C"/>
</dbReference>
<dbReference type="InterPro" id="IPR037041">
    <property type="entry name" value="Trigger_fac_C_sf"/>
</dbReference>
<dbReference type="InterPro" id="IPR008881">
    <property type="entry name" value="Trigger_fac_ribosome-bd_bac"/>
</dbReference>
<dbReference type="InterPro" id="IPR036611">
    <property type="entry name" value="Trigger_fac_ribosome-bd_sf"/>
</dbReference>
<dbReference type="InterPro" id="IPR027304">
    <property type="entry name" value="Trigger_fact/SurA_dom_sf"/>
</dbReference>
<dbReference type="NCBIfam" id="TIGR00115">
    <property type="entry name" value="tig"/>
    <property type="match status" value="1"/>
</dbReference>
<dbReference type="Pfam" id="PF00254">
    <property type="entry name" value="FKBP_C"/>
    <property type="match status" value="1"/>
</dbReference>
<dbReference type="Pfam" id="PF05698">
    <property type="entry name" value="Trigger_C"/>
    <property type="match status" value="1"/>
</dbReference>
<dbReference type="Pfam" id="PF05697">
    <property type="entry name" value="Trigger_N"/>
    <property type="match status" value="1"/>
</dbReference>
<dbReference type="PIRSF" id="PIRSF003095">
    <property type="entry name" value="Trigger_factor"/>
    <property type="match status" value="1"/>
</dbReference>
<dbReference type="SUPFAM" id="SSF54534">
    <property type="entry name" value="FKBP-like"/>
    <property type="match status" value="1"/>
</dbReference>
<dbReference type="SUPFAM" id="SSF109998">
    <property type="entry name" value="Triger factor/SurA peptide-binding domain-like"/>
    <property type="match status" value="1"/>
</dbReference>
<dbReference type="SUPFAM" id="SSF102735">
    <property type="entry name" value="Trigger factor ribosome-binding domain"/>
    <property type="match status" value="1"/>
</dbReference>
<dbReference type="PROSITE" id="PS50059">
    <property type="entry name" value="FKBP_PPIASE"/>
    <property type="match status" value="1"/>
</dbReference>
<proteinExistence type="inferred from homology"/>
<organism>
    <name type="scientific">Ehrlichia ruminantium (strain Gardel)</name>
    <dbReference type="NCBI Taxonomy" id="302409"/>
    <lineage>
        <taxon>Bacteria</taxon>
        <taxon>Pseudomonadati</taxon>
        <taxon>Pseudomonadota</taxon>
        <taxon>Alphaproteobacteria</taxon>
        <taxon>Rickettsiales</taxon>
        <taxon>Anaplasmataceae</taxon>
        <taxon>Ehrlichia</taxon>
    </lineage>
</organism>
<gene>
    <name evidence="1" type="primary">tig</name>
    <name type="ordered locus">ERGA_CDS_01960</name>
</gene>
<keyword id="KW-0131">Cell cycle</keyword>
<keyword id="KW-0132">Cell division</keyword>
<keyword id="KW-0143">Chaperone</keyword>
<keyword id="KW-0963">Cytoplasm</keyword>
<keyword id="KW-0413">Isomerase</keyword>
<keyword id="KW-0697">Rotamase</keyword>
<protein>
    <recommendedName>
        <fullName evidence="1">Trigger factor</fullName>
        <shortName evidence="1">TF</shortName>
        <ecNumber evidence="1">5.2.1.8</ecNumber>
    </recommendedName>
    <alternativeName>
        <fullName evidence="1">PPIase</fullName>
    </alternativeName>
</protein>
<comment type="function">
    <text evidence="1">Involved in protein export. Acts as a chaperone by maintaining the newly synthesized protein in an open conformation. Functions as a peptidyl-prolyl cis-trans isomerase.</text>
</comment>
<comment type="catalytic activity">
    <reaction evidence="1">
        <text>[protein]-peptidylproline (omega=180) = [protein]-peptidylproline (omega=0)</text>
        <dbReference type="Rhea" id="RHEA:16237"/>
        <dbReference type="Rhea" id="RHEA-COMP:10747"/>
        <dbReference type="Rhea" id="RHEA-COMP:10748"/>
        <dbReference type="ChEBI" id="CHEBI:83833"/>
        <dbReference type="ChEBI" id="CHEBI:83834"/>
        <dbReference type="EC" id="5.2.1.8"/>
    </reaction>
</comment>
<comment type="subcellular location">
    <subcellularLocation>
        <location>Cytoplasm</location>
    </subcellularLocation>
    <text evidence="1">About half TF is bound to the ribosome near the polypeptide exit tunnel while the other half is free in the cytoplasm.</text>
</comment>
<comment type="domain">
    <text evidence="1">Consists of 3 domains; the N-terminus binds the ribosome, the middle domain has PPIase activity, while the C-terminus has intrinsic chaperone activity on its own.</text>
</comment>
<comment type="similarity">
    <text evidence="1">Belongs to the FKBP-type PPIase family. Tig subfamily.</text>
</comment>
<evidence type="ECO:0000255" key="1">
    <source>
        <dbReference type="HAMAP-Rule" id="MF_00303"/>
    </source>
</evidence>
<name>TIG_EHRRG</name>